<accession>C0ZYN8</accession>
<proteinExistence type="inferred from homology"/>
<dbReference type="EC" id="5.1.1.7" evidence="1"/>
<dbReference type="EMBL" id="AP008957">
    <property type="protein sequence ID" value="BAH33473.1"/>
    <property type="molecule type" value="Genomic_DNA"/>
</dbReference>
<dbReference type="SMR" id="C0ZYN8"/>
<dbReference type="KEGG" id="rer:RER_27650"/>
<dbReference type="eggNOG" id="COG0253">
    <property type="taxonomic scope" value="Bacteria"/>
</dbReference>
<dbReference type="HOGENOM" id="CLU_053306_4_0_11"/>
<dbReference type="UniPathway" id="UPA00034">
    <property type="reaction ID" value="UER00025"/>
</dbReference>
<dbReference type="Proteomes" id="UP000002204">
    <property type="component" value="Chromosome"/>
</dbReference>
<dbReference type="GO" id="GO:0005829">
    <property type="term" value="C:cytosol"/>
    <property type="evidence" value="ECO:0007669"/>
    <property type="project" value="TreeGrafter"/>
</dbReference>
<dbReference type="GO" id="GO:0008837">
    <property type="term" value="F:diaminopimelate epimerase activity"/>
    <property type="evidence" value="ECO:0007669"/>
    <property type="project" value="UniProtKB-UniRule"/>
</dbReference>
<dbReference type="GO" id="GO:0009089">
    <property type="term" value="P:lysine biosynthetic process via diaminopimelate"/>
    <property type="evidence" value="ECO:0007669"/>
    <property type="project" value="UniProtKB-UniRule"/>
</dbReference>
<dbReference type="Gene3D" id="3.10.310.10">
    <property type="entry name" value="Diaminopimelate Epimerase, Chain A, domain 1"/>
    <property type="match status" value="2"/>
</dbReference>
<dbReference type="HAMAP" id="MF_00197">
    <property type="entry name" value="DAP_epimerase"/>
    <property type="match status" value="1"/>
</dbReference>
<dbReference type="InterPro" id="IPR018510">
    <property type="entry name" value="DAP_epimerase_AS"/>
</dbReference>
<dbReference type="InterPro" id="IPR001653">
    <property type="entry name" value="DAP_epimerase_DapF"/>
</dbReference>
<dbReference type="NCBIfam" id="TIGR00652">
    <property type="entry name" value="DapF"/>
    <property type="match status" value="1"/>
</dbReference>
<dbReference type="PANTHER" id="PTHR31689:SF0">
    <property type="entry name" value="DIAMINOPIMELATE EPIMERASE"/>
    <property type="match status" value="1"/>
</dbReference>
<dbReference type="PANTHER" id="PTHR31689">
    <property type="entry name" value="DIAMINOPIMELATE EPIMERASE, CHLOROPLASTIC"/>
    <property type="match status" value="1"/>
</dbReference>
<dbReference type="Pfam" id="PF01678">
    <property type="entry name" value="DAP_epimerase"/>
    <property type="match status" value="2"/>
</dbReference>
<dbReference type="SUPFAM" id="SSF54506">
    <property type="entry name" value="Diaminopimelate epimerase-like"/>
    <property type="match status" value="2"/>
</dbReference>
<dbReference type="PROSITE" id="PS01326">
    <property type="entry name" value="DAP_EPIMERASE"/>
    <property type="match status" value="1"/>
</dbReference>
<gene>
    <name evidence="1" type="primary">dapF</name>
    <name type="ordered locus">RER_27650</name>
</gene>
<feature type="chain" id="PRO_1000204065" description="Diaminopimelate epimerase">
    <location>
        <begin position="1"/>
        <end position="292"/>
    </location>
</feature>
<feature type="active site" description="Proton donor" evidence="1">
    <location>
        <position position="90"/>
    </location>
</feature>
<feature type="active site" description="Proton acceptor" evidence="1">
    <location>
        <position position="229"/>
    </location>
</feature>
<feature type="binding site" evidence="1">
    <location>
        <position position="14"/>
    </location>
    <ligand>
        <name>substrate</name>
    </ligand>
</feature>
<feature type="binding site" evidence="1">
    <location>
        <position position="81"/>
    </location>
    <ligand>
        <name>substrate</name>
    </ligand>
</feature>
<feature type="binding site" evidence="1">
    <location>
        <begin position="91"/>
        <end position="92"/>
    </location>
    <ligand>
        <name>substrate</name>
    </ligand>
</feature>
<feature type="binding site" evidence="1">
    <location>
        <position position="166"/>
    </location>
    <ligand>
        <name>substrate</name>
    </ligand>
</feature>
<feature type="binding site" evidence="1">
    <location>
        <position position="202"/>
    </location>
    <ligand>
        <name>substrate</name>
    </ligand>
</feature>
<feature type="binding site" evidence="1">
    <location>
        <begin position="220"/>
        <end position="221"/>
    </location>
    <ligand>
        <name>substrate</name>
    </ligand>
</feature>
<feature type="binding site" evidence="1">
    <location>
        <begin position="230"/>
        <end position="231"/>
    </location>
    <ligand>
        <name>substrate</name>
    </ligand>
</feature>
<feature type="site" description="Could be important to modulate the pK values of the two catalytic cysteine residues" evidence="1">
    <location>
        <position position="168"/>
    </location>
</feature>
<feature type="site" description="Could be important to modulate the pK values of the two catalytic cysteine residues" evidence="1">
    <location>
        <position position="220"/>
    </location>
</feature>
<name>DAPF_RHOE4</name>
<sequence>MATMDFSKGHGTQNDFVVLPDLDVRVDLEPARVSALCDRQRGLGADGILRVARAGALADAGVLGALPDGVAAEDWFMDYRNSDGSIAEMCGNGVRVFAHYLKASGLESKDEFVVGSRAGARPVVVHGYDATHGDVTVAMGPIKDLGTSSATIDGRVFAGVGIDVGNPHLACVDEHVTAEVLSALDLSVSPGFDPGFFPHGVNIEIVTPIHDGGVHMRVHERGVGETRSCGTGTVAAAAAALKFDGRDEGSVLVRVLGGEVQVTVEGGEGSLRGPSVLVANGTISDAWWQSLV</sequence>
<evidence type="ECO:0000255" key="1">
    <source>
        <dbReference type="HAMAP-Rule" id="MF_00197"/>
    </source>
</evidence>
<reference key="1">
    <citation type="submission" date="2005-03" db="EMBL/GenBank/DDBJ databases">
        <title>Comparison of the complete genome sequences of Rhodococcus erythropolis PR4 and Rhodococcus opacus B4.</title>
        <authorList>
            <person name="Takarada H."/>
            <person name="Sekine M."/>
            <person name="Hosoyama A."/>
            <person name="Yamada R."/>
            <person name="Fujisawa T."/>
            <person name="Omata S."/>
            <person name="Shimizu A."/>
            <person name="Tsukatani N."/>
            <person name="Tanikawa S."/>
            <person name="Fujita N."/>
            <person name="Harayama S."/>
        </authorList>
    </citation>
    <scope>NUCLEOTIDE SEQUENCE [LARGE SCALE GENOMIC DNA]</scope>
    <source>
        <strain>PR4 / NBRC 100887</strain>
    </source>
</reference>
<protein>
    <recommendedName>
        <fullName evidence="1">Diaminopimelate epimerase</fullName>
        <shortName evidence="1">DAP epimerase</shortName>
        <ecNumber evidence="1">5.1.1.7</ecNumber>
    </recommendedName>
    <alternativeName>
        <fullName evidence="1">PLP-independent amino acid racemase</fullName>
    </alternativeName>
</protein>
<organism>
    <name type="scientific">Rhodococcus erythropolis (strain PR4 / NBRC 100887)</name>
    <dbReference type="NCBI Taxonomy" id="234621"/>
    <lineage>
        <taxon>Bacteria</taxon>
        <taxon>Bacillati</taxon>
        <taxon>Actinomycetota</taxon>
        <taxon>Actinomycetes</taxon>
        <taxon>Mycobacteriales</taxon>
        <taxon>Nocardiaceae</taxon>
        <taxon>Rhodococcus</taxon>
        <taxon>Rhodococcus erythropolis group</taxon>
    </lineage>
</organism>
<comment type="function">
    <text evidence="1">Catalyzes the stereoinversion of LL-2,6-diaminopimelate (L,L-DAP) to meso-diaminopimelate (meso-DAP), a precursor of L-lysine and an essential component of the bacterial peptidoglycan.</text>
</comment>
<comment type="catalytic activity">
    <reaction evidence="1">
        <text>(2S,6S)-2,6-diaminopimelate = meso-2,6-diaminopimelate</text>
        <dbReference type="Rhea" id="RHEA:15393"/>
        <dbReference type="ChEBI" id="CHEBI:57609"/>
        <dbReference type="ChEBI" id="CHEBI:57791"/>
        <dbReference type="EC" id="5.1.1.7"/>
    </reaction>
</comment>
<comment type="pathway">
    <text evidence="1">Amino-acid biosynthesis; L-lysine biosynthesis via DAP pathway; DL-2,6-diaminopimelate from LL-2,6-diaminopimelate: step 1/1.</text>
</comment>
<comment type="subunit">
    <text evidence="1">Homodimer.</text>
</comment>
<comment type="subcellular location">
    <subcellularLocation>
        <location evidence="1">Cytoplasm</location>
    </subcellularLocation>
</comment>
<comment type="similarity">
    <text evidence="1">Belongs to the diaminopimelate epimerase family.</text>
</comment>
<keyword id="KW-0028">Amino-acid biosynthesis</keyword>
<keyword id="KW-0963">Cytoplasm</keyword>
<keyword id="KW-0413">Isomerase</keyword>
<keyword id="KW-0457">Lysine biosynthesis</keyword>